<organism>
    <name type="scientific">Homo sapiens</name>
    <name type="common">Human</name>
    <dbReference type="NCBI Taxonomy" id="9606"/>
    <lineage>
        <taxon>Eukaryota</taxon>
        <taxon>Metazoa</taxon>
        <taxon>Chordata</taxon>
        <taxon>Craniata</taxon>
        <taxon>Vertebrata</taxon>
        <taxon>Euteleostomi</taxon>
        <taxon>Mammalia</taxon>
        <taxon>Eutheria</taxon>
        <taxon>Euarchontoglires</taxon>
        <taxon>Primates</taxon>
        <taxon>Haplorrhini</taxon>
        <taxon>Catarrhini</taxon>
        <taxon>Hominidae</taxon>
        <taxon>Homo</taxon>
    </lineage>
</organism>
<keyword id="KW-0539">Nucleus</keyword>
<keyword id="KW-0597">Phosphoprotein</keyword>
<keyword id="KW-1267">Proteomics identification</keyword>
<keyword id="KW-1185">Reference proteome</keyword>
<keyword id="KW-0804">Transcription</keyword>
<keyword id="KW-0805">Transcription regulation</keyword>
<feature type="chain" id="PRO_0000076645" description="CREB/ATF bZIP transcription factor">
    <location>
        <begin position="1"/>
        <end position="354"/>
    </location>
</feature>
<feature type="domain" description="bZIP">
    <location>
        <begin position="204"/>
        <end position="267"/>
    </location>
</feature>
<feature type="region of interest" description="Disordered" evidence="3">
    <location>
        <begin position="1"/>
        <end position="95"/>
    </location>
</feature>
<feature type="region of interest" description="Disordered" evidence="3">
    <location>
        <begin position="113"/>
        <end position="156"/>
    </location>
</feature>
<feature type="region of interest" description="Disordered" evidence="3">
    <location>
        <begin position="171"/>
        <end position="214"/>
    </location>
</feature>
<feature type="region of interest" description="Basic motif" evidence="1">
    <location>
        <begin position="219"/>
        <end position="226"/>
    </location>
</feature>
<feature type="region of interest" description="Leucine-zipper" evidence="1">
    <location>
        <begin position="232"/>
        <end position="267"/>
    </location>
</feature>
<feature type="short sequence motif" description="HCFC1-binding motif (HBM)" evidence="4">
    <location>
        <begin position="303"/>
        <end position="306"/>
    </location>
</feature>
<feature type="compositionally biased region" description="Low complexity" evidence="3">
    <location>
        <begin position="121"/>
        <end position="132"/>
    </location>
</feature>
<feature type="compositionally biased region" description="Gly residues" evidence="3">
    <location>
        <begin position="133"/>
        <end position="143"/>
    </location>
</feature>
<feature type="compositionally biased region" description="Gly residues" evidence="3">
    <location>
        <begin position="190"/>
        <end position="199"/>
    </location>
</feature>
<feature type="compositionally biased region" description="Low complexity" evidence="3">
    <location>
        <begin position="205"/>
        <end position="214"/>
    </location>
</feature>
<feature type="modified residue" description="Phosphoserine" evidence="8">
    <location>
        <position position="50"/>
    </location>
</feature>
<feature type="mutagenesis site" description="Significantly reduced binding to HCFC1." evidence="4">
    <original>D</original>
    <variation>A</variation>
    <location>
        <position position="303"/>
    </location>
</feature>
<feature type="mutagenesis site" description="Significantly reduced binding to HCFC1." evidence="4">
    <original>H</original>
    <variation>A</variation>
    <location>
        <position position="304"/>
    </location>
</feature>
<feature type="mutagenesis site" description="Does not interact with HCFC1 and is inefficient at inhibiting CREB3 transcriptional activity. Does not colocalize with CREB3 in promyelocytic leukemia protein nuclear bodies (PML-NB)." evidence="4 5">
    <original>Y</original>
    <variation>A</variation>
    <location>
        <position position="306"/>
    </location>
</feature>
<feature type="sequence conflict" description="In Ref. 3; AAH60807." evidence="6" ref="3">
    <original>S</original>
    <variation>F</variation>
    <location>
        <position position="16"/>
    </location>
</feature>
<sequence>MRHSLTKLLAASGSNSPTRSESPEPAATCSLPSDLTRAAAGEEETAAAGSPGRKQQFGDEGELEAGRGSRGGVAVRAPSPEEMEEEAIASLPGEETEDMDFLSGLELADLLDPRQPDWHLDPGLSSPGPLSSSGGGSDSGGLWRGDDDDEAAAAEMQRFSDLLQRLLNGIGGCSSSSDSGSAEKRRRKSPGGGGGGGSGNDNNQAATKSPRKAAAAAARLNRLKKKEYVMGLESRVRGLAAENQELRAENRELGKRVQALQEESRYLRAVLANETGLARLLSRLSGVGLRLTTSLFRDSPAGDHDYALPVGKQKQDLLEEDDSAGGVCLHVDKDKVSVEFCSACARKASSSLKM</sequence>
<accession>Q9NS37</accession>
<accession>B2R8Q9</accession>
<accession>Q0P5U9</accession>
<accession>Q52LT3</accession>
<gene>
    <name type="primary">CREBZF</name>
    <name type="synonym">ZF</name>
</gene>
<proteinExistence type="evidence at protein level"/>
<protein>
    <recommendedName>
        <fullName>CREB/ATF bZIP transcription factor</fullName>
    </recommendedName>
    <alternativeName>
        <fullName>Host cell factor-binding transcription factor Zhangfei</fullName>
        <shortName>HCF-binding transcription factor Zhangfei</shortName>
    </alternativeName>
</protein>
<comment type="function">
    <text evidence="4 5">Strongly activates transcription when bound to HCFC1. Suppresses the expression of HSV proteins in cells infected with the virus in a HCFC1-dependent manner. Also suppresses the HCFC1-dependent transcriptional activation by CREB3 and reduces the amount of CREB3 in the cell. Able to down-regulate expression of some cellular genes in CREBZF-expressing cells.</text>
</comment>
<comment type="subunit">
    <text evidence="4 5">Interacts with HCFC1; the interaction inhibits CREB3 transcriptional activity (PubMed:10871379, PubMed:15705566). Interacts with CREB3; the interaction occurs only in combination with HCFC1 (PubMed:15705566).</text>
</comment>
<comment type="interaction">
    <interactant intactId="EBI-632965">
        <id>Q9NS37</id>
    </interactant>
    <interactant intactId="EBI-10198377">
        <id>P14621</id>
        <label>ACYP2</label>
    </interactant>
    <organismsDiffer>false</organismsDiffer>
    <experiments>3</experiments>
</comment>
<comment type="interaction">
    <interactant intactId="EBI-632965">
        <id>Q9NS37</id>
    </interactant>
    <interactant intactId="EBI-492498">
        <id>P18848</id>
        <label>ATF4</label>
    </interactant>
    <organismsDiffer>false</organismsDiffer>
    <experiments>7</experiments>
</comment>
<comment type="interaction">
    <interactant intactId="EBI-632965">
        <id>Q9NS37</id>
    </interactant>
    <interactant intactId="EBI-625002">
        <id>O43889</id>
        <label>CREB3</label>
    </interactant>
    <organismsDiffer>false</organismsDiffer>
    <experiments>3</experiments>
</comment>
<comment type="interaction">
    <interactant intactId="EBI-632965">
        <id>Q9NS37</id>
    </interactant>
    <interactant intactId="EBI-632965">
        <id>Q9NS37</id>
        <label>CREBZF</label>
    </interactant>
    <organismsDiffer>false</organismsDiffer>
    <experiments>5</experiments>
</comment>
<comment type="interaction">
    <interactant intactId="EBI-632965">
        <id>Q9NS37</id>
    </interactant>
    <interactant intactId="EBI-748128">
        <id>Q8WYA6</id>
        <label>CTNNBL1</label>
    </interactant>
    <organismsDiffer>false</organismsDiffer>
    <experiments>3</experiments>
</comment>
<comment type="interaction">
    <interactant intactId="EBI-632965">
        <id>Q9NS37</id>
    </interactant>
    <interactant intactId="EBI-396176">
        <id>P51610</id>
        <label>HCFC1</label>
    </interactant>
    <organismsDiffer>false</organismsDiffer>
    <experiments>8</experiments>
</comment>
<comment type="interaction">
    <interactant intactId="EBI-632965">
        <id>Q9NS37</id>
    </interactant>
    <interactant intactId="EBI-18150048">
        <id>P51610-4</id>
        <label>HCFC1</label>
    </interactant>
    <organismsDiffer>false</organismsDiffer>
    <experiments>3</experiments>
</comment>
<comment type="interaction">
    <interactant intactId="EBI-632965">
        <id>Q9NS37</id>
    </interactant>
    <interactant intactId="EBI-2804436">
        <id>Q14494</id>
        <label>NFE2L1</label>
    </interactant>
    <organismsDiffer>false</organismsDiffer>
    <experiments>3</experiments>
</comment>
<comment type="interaction">
    <interactant intactId="EBI-632965">
        <id>Q9NS37</id>
    </interactant>
    <interactant intactId="EBI-2007911">
        <id>Q16236</id>
        <label>NFE2L2</label>
    </interactant>
    <organismsDiffer>false</organismsDiffer>
    <experiments>5</experiments>
</comment>
<comment type="interaction">
    <interactant intactId="EBI-632965">
        <id>Q9NS37</id>
    </interactant>
    <interactant intactId="EBI-749285">
        <id>Q15311</id>
        <label>RALBP1</label>
    </interactant>
    <organismsDiffer>false</organismsDiffer>
    <experiments>5</experiments>
</comment>
<comment type="interaction">
    <interactant intactId="EBI-632965">
        <id>Q9NS37</id>
    </interactant>
    <interactant intactId="EBI-1802965">
        <id>Q96EB6</id>
        <label>SIRT1</label>
    </interactant>
    <organismsDiffer>false</organismsDiffer>
    <experiments>3</experiments>
</comment>
<comment type="interaction">
    <interactant intactId="EBI-632965">
        <id>Q9NS37</id>
    </interactant>
    <interactant intactId="EBI-1034261">
        <id>O00268</id>
        <label>TAF4</label>
    </interactant>
    <organismsDiffer>false</organismsDiffer>
    <experiments>2</experiments>
</comment>
<comment type="interaction">
    <interactant intactId="EBI-632965">
        <id>Q9NS37</id>
    </interactant>
    <interactant intactId="EBI-6447954">
        <id>Q5W5X9</id>
        <label>TTC23</label>
    </interactant>
    <organismsDiffer>false</organismsDiffer>
    <experiments>3</experiments>
</comment>
<comment type="interaction">
    <interactant intactId="EBI-632965">
        <id>Q9NS37</id>
    </interactant>
    <interactant intactId="EBI-9090990">
        <id>Q5W5X9-3</id>
        <label>TTC23</label>
    </interactant>
    <organismsDiffer>false</organismsDiffer>
    <experiments>3</experiments>
</comment>
<comment type="interaction">
    <interactant intactId="EBI-632965">
        <id>Q9NS37</id>
    </interactant>
    <interactant intactId="EBI-6942961">
        <id>P17861</id>
        <label>XBP1</label>
    </interactant>
    <organismsDiffer>false</organismsDiffer>
    <experiments>4</experiments>
</comment>
<comment type="interaction">
    <interactant intactId="EBI-632965">
        <id>Q9NS37</id>
    </interactant>
    <interactant intactId="EBI-5274019">
        <id>P62509</id>
        <label>Esrrg</label>
    </interactant>
    <organismsDiffer>true</organismsDiffer>
    <experiments>3</experiments>
</comment>
<comment type="interaction">
    <interactant intactId="EBI-632965">
        <id>Q9NS37</id>
    </interactant>
    <interactant intactId="EBI-10890294">
        <id>P0C746</id>
        <label>HBZ</label>
    </interactant>
    <organismsDiffer>true</organismsDiffer>
    <experiments>3</experiments>
</comment>
<comment type="subcellular location">
    <subcellularLocation>
        <location evidence="5">Nucleus</location>
    </subcellularLocation>
    <text>Colocalizes in promyelocytic leukemia protein nuclear bodies (PML-NB) with CREB3 and HCFC1.</text>
</comment>
<comment type="tissue specificity">
    <text evidence="4">In adults, expressed most abundantly in heart, liver and skeletal muscle, moderately abundant in kidney and pancreas, and barely detectable in lung. In fetal tissues, expressed most abundantly in kidney and very low amounts in heart, lung and liver.</text>
</comment>
<comment type="miscellaneous">
    <text>Named 'Zhangfei' after a legendary Chinese warrior who was contemporary with Luman in around 220 AD.</text>
</comment>
<comment type="similarity">
    <text evidence="2">Belongs to the bZIP family. ATF subfamily.</text>
</comment>
<comment type="sequence caution" evidence="6">
    <conflict type="erroneous initiation">
        <sequence resource="EMBL-CDS" id="AAD28325"/>
    </conflict>
    <text>Truncated N-terminus.</text>
</comment>
<comment type="sequence caution" evidence="6">
    <conflict type="frameshift">
        <sequence resource="EMBL-CDS" id="AAD28325"/>
    </conflict>
</comment>
<comment type="sequence caution" evidence="6">
    <conflict type="erroneous initiation">
        <sequence resource="EMBL-CDS" id="AAZ42189"/>
    </conflict>
    <text>Truncated N-terminus.</text>
</comment>
<comment type="sequence caution" evidence="6">
    <conflict type="erroneous initiation">
        <sequence resource="EMBL-CDS" id="BAG36256"/>
    </conflict>
    <text>Truncated N-terminus.</text>
</comment>
<comment type="sequence caution" evidence="6">
    <conflict type="frameshift">
        <sequence resource="EMBL-CDS" id="BAG36256"/>
    </conflict>
</comment>
<evidence type="ECO:0000250" key="1"/>
<evidence type="ECO:0000255" key="2"/>
<evidence type="ECO:0000256" key="3">
    <source>
        <dbReference type="SAM" id="MobiDB-lite"/>
    </source>
</evidence>
<evidence type="ECO:0000269" key="4">
    <source>
    </source>
</evidence>
<evidence type="ECO:0000269" key="5">
    <source>
    </source>
</evidence>
<evidence type="ECO:0000305" key="6"/>
<evidence type="ECO:0000312" key="7">
    <source>
        <dbReference type="EMBL" id="AAD28325.1"/>
    </source>
</evidence>
<evidence type="ECO:0007744" key="8">
    <source>
    </source>
</evidence>
<dbReference type="EMBL" id="AF039942">
    <property type="protein sequence ID" value="AAD28325.1"/>
    <property type="status" value="ALT_SEQ"/>
    <property type="molecule type" value="mRNA"/>
</dbReference>
<dbReference type="EMBL" id="AP000642">
    <property type="status" value="NOT_ANNOTATED_CDS"/>
    <property type="molecule type" value="Genomic_DNA"/>
</dbReference>
<dbReference type="EMBL" id="BC060807">
    <property type="protein sequence ID" value="AAH60807.1"/>
    <property type="molecule type" value="mRNA"/>
</dbReference>
<dbReference type="EMBL" id="BC093796">
    <property type="protein sequence ID" value="AAH93796.2"/>
    <property type="molecule type" value="mRNA"/>
</dbReference>
<dbReference type="EMBL" id="BC093798">
    <property type="protein sequence ID" value="AAH93798.2"/>
    <property type="molecule type" value="mRNA"/>
</dbReference>
<dbReference type="EMBL" id="AK313471">
    <property type="protein sequence ID" value="BAG36256.1"/>
    <property type="status" value="ALT_SEQ"/>
    <property type="molecule type" value="mRNA"/>
</dbReference>
<dbReference type="EMBL" id="DQ128105">
    <property type="protein sequence ID" value="AAZ42189.1"/>
    <property type="status" value="ALT_INIT"/>
    <property type="molecule type" value="mRNA"/>
</dbReference>
<dbReference type="CCDS" id="CCDS41697.1"/>
<dbReference type="RefSeq" id="NP_001034707.1">
    <property type="nucleotide sequence ID" value="NM_001039618.4"/>
</dbReference>
<dbReference type="RefSeq" id="XP_011543497.1">
    <property type="nucleotide sequence ID" value="XM_011545195.3"/>
</dbReference>
<dbReference type="RefSeq" id="XP_016873577.1">
    <property type="nucleotide sequence ID" value="XM_017018088.2"/>
</dbReference>
<dbReference type="RefSeq" id="XP_016873578.1">
    <property type="nucleotide sequence ID" value="XM_017018089.2"/>
</dbReference>
<dbReference type="RefSeq" id="XP_016873579.1">
    <property type="nucleotide sequence ID" value="XM_017018090.2"/>
</dbReference>
<dbReference type="RefSeq" id="XP_016873580.1">
    <property type="nucleotide sequence ID" value="XM_017018091.1"/>
</dbReference>
<dbReference type="RefSeq" id="XP_016873581.1">
    <property type="nucleotide sequence ID" value="XM_017018092.1"/>
</dbReference>
<dbReference type="RefSeq" id="XP_047283335.1">
    <property type="nucleotide sequence ID" value="XM_047427379.1"/>
</dbReference>
<dbReference type="RefSeq" id="XP_054225549.1">
    <property type="nucleotide sequence ID" value="XM_054369574.1"/>
</dbReference>
<dbReference type="RefSeq" id="XP_054225550.1">
    <property type="nucleotide sequence ID" value="XM_054369575.1"/>
</dbReference>
<dbReference type="SMR" id="Q9NS37"/>
<dbReference type="BioGRID" id="121817">
    <property type="interactions" value="31"/>
</dbReference>
<dbReference type="ComplexPortal" id="CPX-6542">
    <property type="entry name" value="bZIP transcription factor complex, ATF4-CREBZF"/>
</dbReference>
<dbReference type="ComplexPortal" id="CPX-6601">
    <property type="entry name" value="bZIP transcription factor complex, ATF6B-CREBZF"/>
</dbReference>
<dbReference type="DIP" id="DIP-33934N"/>
<dbReference type="ELM" id="Q9NS37"/>
<dbReference type="FunCoup" id="Q9NS37">
    <property type="interactions" value="2337"/>
</dbReference>
<dbReference type="IntAct" id="Q9NS37">
    <property type="interactions" value="29"/>
</dbReference>
<dbReference type="MINT" id="Q9NS37"/>
<dbReference type="STRING" id="9606.ENSP00000433459"/>
<dbReference type="iPTMnet" id="Q9NS37"/>
<dbReference type="PhosphoSitePlus" id="Q9NS37"/>
<dbReference type="BioMuta" id="CREBZF"/>
<dbReference type="DMDM" id="251757415"/>
<dbReference type="jPOST" id="Q9NS37"/>
<dbReference type="MassIVE" id="Q9NS37"/>
<dbReference type="PaxDb" id="9606-ENSP00000433459"/>
<dbReference type="PeptideAtlas" id="Q9NS37"/>
<dbReference type="ProteomicsDB" id="82476"/>
<dbReference type="Antibodypedia" id="31388">
    <property type="antibodies" value="195 antibodies from 27 providers"/>
</dbReference>
<dbReference type="DNASU" id="58487"/>
<dbReference type="Ensembl" id="ENST00000490820.2">
    <property type="protein sequence ID" value="ENSP00000434281.1"/>
    <property type="gene ID" value="ENSG00000137504.16"/>
</dbReference>
<dbReference type="Ensembl" id="ENST00000527447.2">
    <property type="protein sequence ID" value="ENSP00000433459.1"/>
    <property type="gene ID" value="ENSG00000137504.16"/>
</dbReference>
<dbReference type="Ensembl" id="ENST00000850607.1">
    <property type="protein sequence ID" value="ENSP00000520895.1"/>
    <property type="gene ID" value="ENSG00000137504.16"/>
</dbReference>
<dbReference type="GeneID" id="58487"/>
<dbReference type="KEGG" id="hsa:58487"/>
<dbReference type="MANE-Select" id="ENST00000527447.2">
    <property type="protein sequence ID" value="ENSP00000433459.1"/>
    <property type="RefSeq nucleotide sequence ID" value="NM_001039618.4"/>
    <property type="RefSeq protein sequence ID" value="NP_001034707.1"/>
</dbReference>
<dbReference type="UCSC" id="uc001pas.3">
    <property type="organism name" value="human"/>
</dbReference>
<dbReference type="AGR" id="HGNC:24905"/>
<dbReference type="CTD" id="58487"/>
<dbReference type="DisGeNET" id="58487"/>
<dbReference type="GeneCards" id="CREBZF"/>
<dbReference type="HGNC" id="HGNC:24905">
    <property type="gene designation" value="CREBZF"/>
</dbReference>
<dbReference type="HPA" id="ENSG00000137504">
    <property type="expression patterns" value="Low tissue specificity"/>
</dbReference>
<dbReference type="MIM" id="606444">
    <property type="type" value="gene"/>
</dbReference>
<dbReference type="neXtProt" id="NX_Q9NS37"/>
<dbReference type="OpenTargets" id="ENSG00000137504"/>
<dbReference type="PharmGKB" id="PA162382821"/>
<dbReference type="VEuPathDB" id="HostDB:ENSG00000137504"/>
<dbReference type="eggNOG" id="ENOG502S3I0">
    <property type="taxonomic scope" value="Eukaryota"/>
</dbReference>
<dbReference type="GeneTree" id="ENSGT00390000016589"/>
<dbReference type="InParanoid" id="Q9NS37"/>
<dbReference type="OMA" id="ARPDWDL"/>
<dbReference type="OrthoDB" id="6606299at2759"/>
<dbReference type="PAN-GO" id="Q9NS37">
    <property type="GO annotations" value="3 GO annotations based on evolutionary models"/>
</dbReference>
<dbReference type="PhylomeDB" id="Q9NS37"/>
<dbReference type="TreeFam" id="TF336153"/>
<dbReference type="PathwayCommons" id="Q9NS37"/>
<dbReference type="SignaLink" id="Q9NS37"/>
<dbReference type="BioGRID-ORCS" id="58487">
    <property type="hits" value="19 hits in 1161 CRISPR screens"/>
</dbReference>
<dbReference type="ChiTaRS" id="CREBZF">
    <property type="organism name" value="human"/>
</dbReference>
<dbReference type="GenomeRNAi" id="58487"/>
<dbReference type="Pharos" id="Q9NS37">
    <property type="development level" value="Tbio"/>
</dbReference>
<dbReference type="PRO" id="PR:Q9NS37"/>
<dbReference type="Proteomes" id="UP000005640">
    <property type="component" value="Chromosome 11"/>
</dbReference>
<dbReference type="RNAct" id="Q9NS37">
    <property type="molecule type" value="protein"/>
</dbReference>
<dbReference type="Bgee" id="ENSG00000137504">
    <property type="expression patterns" value="Expressed in sural nerve and 198 other cell types or tissues"/>
</dbReference>
<dbReference type="ExpressionAtlas" id="Q9NS37">
    <property type="expression patterns" value="baseline and differential"/>
</dbReference>
<dbReference type="GO" id="GO:0000785">
    <property type="term" value="C:chromatin"/>
    <property type="evidence" value="ECO:0000247"/>
    <property type="project" value="NTNU_SB"/>
</dbReference>
<dbReference type="GO" id="GO:0005739">
    <property type="term" value="C:mitochondrion"/>
    <property type="evidence" value="ECO:0000314"/>
    <property type="project" value="HPA"/>
</dbReference>
<dbReference type="GO" id="GO:0005654">
    <property type="term" value="C:nucleoplasm"/>
    <property type="evidence" value="ECO:0000314"/>
    <property type="project" value="HPA"/>
</dbReference>
<dbReference type="GO" id="GO:0005634">
    <property type="term" value="C:nucleus"/>
    <property type="evidence" value="ECO:0000314"/>
    <property type="project" value="UniProtKB"/>
</dbReference>
<dbReference type="GO" id="GO:0090575">
    <property type="term" value="C:RNA polymerase II transcription regulator complex"/>
    <property type="evidence" value="ECO:0000353"/>
    <property type="project" value="ComplexPortal"/>
</dbReference>
<dbReference type="GO" id="GO:0003677">
    <property type="term" value="F:DNA binding"/>
    <property type="evidence" value="ECO:0000303"/>
    <property type="project" value="UniProtKB"/>
</dbReference>
<dbReference type="GO" id="GO:0000981">
    <property type="term" value="F:DNA-binding transcription factor activity, RNA polymerase II-specific"/>
    <property type="evidence" value="ECO:0000247"/>
    <property type="project" value="NTNU_SB"/>
</dbReference>
<dbReference type="GO" id="GO:0042802">
    <property type="term" value="F:identical protein binding"/>
    <property type="evidence" value="ECO:0000353"/>
    <property type="project" value="IntAct"/>
</dbReference>
<dbReference type="GO" id="GO:0036500">
    <property type="term" value="P:ATF6-mediated unfolded protein response"/>
    <property type="evidence" value="ECO:0000303"/>
    <property type="project" value="ComplexPortal"/>
</dbReference>
<dbReference type="GO" id="GO:0140467">
    <property type="term" value="P:integrated stress response signaling"/>
    <property type="evidence" value="ECO:0000303"/>
    <property type="project" value="ComplexPortal"/>
</dbReference>
<dbReference type="GO" id="GO:0045892">
    <property type="term" value="P:negative regulation of DNA-templated transcription"/>
    <property type="evidence" value="ECO:0000315"/>
    <property type="project" value="UniProtKB"/>
</dbReference>
<dbReference type="GO" id="GO:0045814">
    <property type="term" value="P:negative regulation of gene expression, epigenetic"/>
    <property type="evidence" value="ECO:0000270"/>
    <property type="project" value="UniProtKB"/>
</dbReference>
<dbReference type="GO" id="GO:0045944">
    <property type="term" value="P:positive regulation of transcription by RNA polymerase II"/>
    <property type="evidence" value="ECO:0000314"/>
    <property type="project" value="ComplexPortal"/>
</dbReference>
<dbReference type="GO" id="GO:0051090">
    <property type="term" value="P:regulation of DNA-binding transcription factor activity"/>
    <property type="evidence" value="ECO:0000314"/>
    <property type="project" value="UniProtKB"/>
</dbReference>
<dbReference type="GO" id="GO:0006357">
    <property type="term" value="P:regulation of transcription by RNA polymerase II"/>
    <property type="evidence" value="ECO:0000314"/>
    <property type="project" value="GO_Central"/>
</dbReference>
<dbReference type="GO" id="GO:0009615">
    <property type="term" value="P:response to virus"/>
    <property type="evidence" value="ECO:0000314"/>
    <property type="project" value="UniProtKB"/>
</dbReference>
<dbReference type="FunFam" id="1.20.5.170:FF:000070">
    <property type="entry name" value="CREB/ATF bZIP transcription factor"/>
    <property type="match status" value="1"/>
</dbReference>
<dbReference type="Gene3D" id="1.20.5.170">
    <property type="match status" value="1"/>
</dbReference>
<dbReference type="InterPro" id="IPR004827">
    <property type="entry name" value="bZIP"/>
</dbReference>
<dbReference type="InterPro" id="IPR046347">
    <property type="entry name" value="bZIP_sf"/>
</dbReference>
<dbReference type="Pfam" id="PF00170">
    <property type="entry name" value="bZIP_1"/>
    <property type="match status" value="1"/>
</dbReference>
<dbReference type="SUPFAM" id="SSF57959">
    <property type="entry name" value="Leucine zipper domain"/>
    <property type="match status" value="1"/>
</dbReference>
<reference evidence="6 7" key="1">
    <citation type="journal article" date="2000" name="Nucleic Acids Res.">
        <title>Zhangfei: a second cellular protein interacts with herpes simplex virus accessory factor HCF in a manner similar to Luman and VP16.</title>
        <authorList>
            <person name="Lu R."/>
            <person name="Misra V."/>
        </authorList>
    </citation>
    <scope>NUCLEOTIDE SEQUENCE [MRNA]</scope>
    <scope>FUNCTION</scope>
    <scope>INTERACTION WITH HCFC1</scope>
    <scope>TISSUE SPECIFICITY</scope>
    <scope>MOTIF</scope>
    <scope>MUTAGENESIS OF ASP-303; HIS-304 AND TYR-306</scope>
    <source>
        <tissue>Cervix carcinoma</tissue>
    </source>
</reference>
<reference key="2">
    <citation type="journal article" date="2006" name="Nature">
        <title>Human chromosome 11 DNA sequence and analysis including novel gene identification.</title>
        <authorList>
            <person name="Taylor T.D."/>
            <person name="Noguchi H."/>
            <person name="Totoki Y."/>
            <person name="Toyoda A."/>
            <person name="Kuroki Y."/>
            <person name="Dewar K."/>
            <person name="Lloyd C."/>
            <person name="Itoh T."/>
            <person name="Takeda T."/>
            <person name="Kim D.-W."/>
            <person name="She X."/>
            <person name="Barlow K.F."/>
            <person name="Bloom T."/>
            <person name="Bruford E."/>
            <person name="Chang J.L."/>
            <person name="Cuomo C.A."/>
            <person name="Eichler E."/>
            <person name="FitzGerald M.G."/>
            <person name="Jaffe D.B."/>
            <person name="LaButti K."/>
            <person name="Nicol R."/>
            <person name="Park H.-S."/>
            <person name="Seaman C."/>
            <person name="Sougnez C."/>
            <person name="Yang X."/>
            <person name="Zimmer A.R."/>
            <person name="Zody M.C."/>
            <person name="Birren B.W."/>
            <person name="Nusbaum C."/>
            <person name="Fujiyama A."/>
            <person name="Hattori M."/>
            <person name="Rogers J."/>
            <person name="Lander E.S."/>
            <person name="Sakaki Y."/>
        </authorList>
    </citation>
    <scope>NUCLEOTIDE SEQUENCE [LARGE SCALE GENOMIC DNA]</scope>
</reference>
<reference key="3">
    <citation type="journal article" date="2004" name="Genome Res.">
        <title>The status, quality, and expansion of the NIH full-length cDNA project: the Mammalian Gene Collection (MGC).</title>
        <authorList>
            <consortium name="The MGC Project Team"/>
        </authorList>
    </citation>
    <scope>NUCLEOTIDE SEQUENCE [LARGE SCALE MRNA]</scope>
    <source>
        <tissue>Brain</tissue>
        <tissue>Placenta</tissue>
    </source>
</reference>
<reference key="4">
    <citation type="journal article" date="2004" name="Nat. Genet.">
        <title>Complete sequencing and characterization of 21,243 full-length human cDNAs.</title>
        <authorList>
            <person name="Ota T."/>
            <person name="Suzuki Y."/>
            <person name="Nishikawa T."/>
            <person name="Otsuki T."/>
            <person name="Sugiyama T."/>
            <person name="Irie R."/>
            <person name="Wakamatsu A."/>
            <person name="Hayashi K."/>
            <person name="Sato H."/>
            <person name="Nagai K."/>
            <person name="Kimura K."/>
            <person name="Makita H."/>
            <person name="Sekine M."/>
            <person name="Obayashi M."/>
            <person name="Nishi T."/>
            <person name="Shibahara T."/>
            <person name="Tanaka T."/>
            <person name="Ishii S."/>
            <person name="Yamamoto J."/>
            <person name="Saito K."/>
            <person name="Kawai Y."/>
            <person name="Isono Y."/>
            <person name="Nakamura Y."/>
            <person name="Nagahari K."/>
            <person name="Murakami K."/>
            <person name="Yasuda T."/>
            <person name="Iwayanagi T."/>
            <person name="Wagatsuma M."/>
            <person name="Shiratori A."/>
            <person name="Sudo H."/>
            <person name="Hosoiri T."/>
            <person name="Kaku Y."/>
            <person name="Kodaira H."/>
            <person name="Kondo H."/>
            <person name="Sugawara M."/>
            <person name="Takahashi M."/>
            <person name="Kanda K."/>
            <person name="Yokoi T."/>
            <person name="Furuya T."/>
            <person name="Kikkawa E."/>
            <person name="Omura Y."/>
            <person name="Abe K."/>
            <person name="Kamihara K."/>
            <person name="Katsuta N."/>
            <person name="Sato K."/>
            <person name="Tanikawa M."/>
            <person name="Yamazaki M."/>
            <person name="Ninomiya K."/>
            <person name="Ishibashi T."/>
            <person name="Yamashita H."/>
            <person name="Murakawa K."/>
            <person name="Fujimori K."/>
            <person name="Tanai H."/>
            <person name="Kimata M."/>
            <person name="Watanabe M."/>
            <person name="Hiraoka S."/>
            <person name="Chiba Y."/>
            <person name="Ishida S."/>
            <person name="Ono Y."/>
            <person name="Takiguchi S."/>
            <person name="Watanabe S."/>
            <person name="Yosida M."/>
            <person name="Hotuta T."/>
            <person name="Kusano J."/>
            <person name="Kanehori K."/>
            <person name="Takahashi-Fujii A."/>
            <person name="Hara H."/>
            <person name="Tanase T.-O."/>
            <person name="Nomura Y."/>
            <person name="Togiya S."/>
            <person name="Komai F."/>
            <person name="Hara R."/>
            <person name="Takeuchi K."/>
            <person name="Arita M."/>
            <person name="Imose N."/>
            <person name="Musashino K."/>
            <person name="Yuuki H."/>
            <person name="Oshima A."/>
            <person name="Sasaki N."/>
            <person name="Aotsuka S."/>
            <person name="Yoshikawa Y."/>
            <person name="Matsunawa H."/>
            <person name="Ichihara T."/>
            <person name="Shiohata N."/>
            <person name="Sano S."/>
            <person name="Moriya S."/>
            <person name="Momiyama H."/>
            <person name="Satoh N."/>
            <person name="Takami S."/>
            <person name="Terashima Y."/>
            <person name="Suzuki O."/>
            <person name="Nakagawa S."/>
            <person name="Senoh A."/>
            <person name="Mizoguchi H."/>
            <person name="Goto Y."/>
            <person name="Shimizu F."/>
            <person name="Wakebe H."/>
            <person name="Hishigaki H."/>
            <person name="Watanabe T."/>
            <person name="Sugiyama A."/>
            <person name="Takemoto M."/>
            <person name="Kawakami B."/>
            <person name="Yamazaki M."/>
            <person name="Watanabe K."/>
            <person name="Kumagai A."/>
            <person name="Itakura S."/>
            <person name="Fukuzumi Y."/>
            <person name="Fujimori Y."/>
            <person name="Komiyama M."/>
            <person name="Tashiro H."/>
            <person name="Tanigami A."/>
            <person name="Fujiwara T."/>
            <person name="Ono T."/>
            <person name="Yamada K."/>
            <person name="Fujii Y."/>
            <person name="Ozaki K."/>
            <person name="Hirao M."/>
            <person name="Ohmori Y."/>
            <person name="Kawabata A."/>
            <person name="Hikiji T."/>
            <person name="Kobatake N."/>
            <person name="Inagaki H."/>
            <person name="Ikema Y."/>
            <person name="Okamoto S."/>
            <person name="Okitani R."/>
            <person name="Kawakami T."/>
            <person name="Noguchi S."/>
            <person name="Itoh T."/>
            <person name="Shigeta K."/>
            <person name="Senba T."/>
            <person name="Matsumura K."/>
            <person name="Nakajima Y."/>
            <person name="Mizuno T."/>
            <person name="Morinaga M."/>
            <person name="Sasaki M."/>
            <person name="Togashi T."/>
            <person name="Oyama M."/>
            <person name="Hata H."/>
            <person name="Watanabe M."/>
            <person name="Komatsu T."/>
            <person name="Mizushima-Sugano J."/>
            <person name="Satoh T."/>
            <person name="Shirai Y."/>
            <person name="Takahashi Y."/>
            <person name="Nakagawa K."/>
            <person name="Okumura K."/>
            <person name="Nagase T."/>
            <person name="Nomura N."/>
            <person name="Kikuchi H."/>
            <person name="Masuho Y."/>
            <person name="Yamashita R."/>
            <person name="Nakai K."/>
            <person name="Yada T."/>
            <person name="Nakamura Y."/>
            <person name="Ohara O."/>
            <person name="Isogai T."/>
            <person name="Sugano S."/>
        </authorList>
    </citation>
    <scope>NUCLEOTIDE SEQUENCE [LARGE SCALE MRNA] OF 18-354</scope>
    <source>
        <tissue>Hippocampus</tissue>
    </source>
</reference>
<reference key="5">
    <citation type="submission" date="2005-07" db="EMBL/GenBank/DDBJ databases">
        <authorList>
            <person name="Zhang J.W."/>
            <person name="Zhang X."/>
            <person name="Ma Y.N."/>
        </authorList>
    </citation>
    <scope>NUCLEOTIDE SEQUENCE [MRNA] OF 74-354</scope>
    <source>
        <tissue>Bone marrow</tissue>
    </source>
</reference>
<reference evidence="6" key="6">
    <citation type="journal article" date="2005" name="J. Biol. Chem.">
        <title>Zhangfei is a potent and specific inhibitor of the host cell factor-binding transcription factor Luman.</title>
        <authorList>
            <person name="Misra V."/>
            <person name="Rapin N."/>
            <person name="Akhova O."/>
            <person name="Bainbridge M."/>
            <person name="Korchinski P."/>
        </authorList>
    </citation>
    <scope>FUNCTION AS A SUPPRESSOR OF CREB3 TRANSCRIPTIONAL ACTIVITY</scope>
    <scope>INTERACTION WITH CREB3 AND HCFC1</scope>
    <scope>SUBCELLULAR LOCATION</scope>
    <scope>MUTAGENESIS OF TYR-306</scope>
</reference>
<reference key="7">
    <citation type="journal article" date="2014" name="J. Proteomics">
        <title>An enzyme assisted RP-RPLC approach for in-depth analysis of human liver phosphoproteome.</title>
        <authorList>
            <person name="Bian Y."/>
            <person name="Song C."/>
            <person name="Cheng K."/>
            <person name="Dong M."/>
            <person name="Wang F."/>
            <person name="Huang J."/>
            <person name="Sun D."/>
            <person name="Wang L."/>
            <person name="Ye M."/>
            <person name="Zou H."/>
        </authorList>
    </citation>
    <scope>PHOSPHORYLATION [LARGE SCALE ANALYSIS] AT SER-50</scope>
    <scope>IDENTIFICATION BY MASS SPECTROMETRY [LARGE SCALE ANALYSIS]</scope>
    <source>
        <tissue>Liver</tissue>
    </source>
</reference>
<name>ZHANG_HUMAN</name>